<organism>
    <name type="scientific">Conus litteratus</name>
    <name type="common">Lettered cone</name>
    <dbReference type="NCBI Taxonomy" id="89445"/>
    <lineage>
        <taxon>Eukaryota</taxon>
        <taxon>Metazoa</taxon>
        <taxon>Spiralia</taxon>
        <taxon>Lophotrochozoa</taxon>
        <taxon>Mollusca</taxon>
        <taxon>Gastropoda</taxon>
        <taxon>Caenogastropoda</taxon>
        <taxon>Neogastropoda</taxon>
        <taxon>Conoidea</taxon>
        <taxon>Conidae</taxon>
        <taxon>Conus</taxon>
        <taxon>Elisaconus</taxon>
    </lineage>
</organism>
<protein>
    <recommendedName>
        <fullName evidence="3">Conotoxin Lt5.10</fullName>
    </recommendedName>
    <alternativeName>
        <fullName evidence="6">Lt5j</fullName>
    </alternativeName>
</protein>
<proteinExistence type="inferred from homology"/>
<keyword id="KW-1015">Disulfide bond</keyword>
<keyword id="KW-0528">Neurotoxin</keyword>
<keyword id="KW-0964">Secreted</keyword>
<keyword id="KW-0732">Signal</keyword>
<keyword id="KW-0800">Toxin</keyword>
<sequence>MLCLPVFIILLLLASPAAPKSLETRIQNDLIRAGLTDADLKTEKGFLSGLLNVAGSVCCKVDTSCCSSQ</sequence>
<evidence type="ECO:0000250" key="1"/>
<evidence type="ECO:0000255" key="2"/>
<evidence type="ECO:0000303" key="3">
    <source>
    </source>
</evidence>
<evidence type="ECO:0000305" key="4"/>
<evidence type="ECO:0000305" key="5">
    <source>
    </source>
</evidence>
<evidence type="ECO:0000312" key="6">
    <source>
        <dbReference type="EMBL" id="ABC70199.1"/>
    </source>
</evidence>
<comment type="subcellular location">
    <subcellularLocation>
        <location evidence="5">Secreted</location>
    </subcellularLocation>
</comment>
<comment type="tissue specificity">
    <text evidence="5">Expressed by the venom duct.</text>
</comment>
<comment type="domain">
    <text evidence="4">The cysteine framework is V (CC-CC).</text>
</comment>
<comment type="PTM">
    <text evidence="4">Contains 2 disulfide bonds that can be either 'C1-C3, C2-C4' or 'C1-C4, C2-C3', since these disulfide connectivities have been observed for conotoxins with cysteine framework V (for examples, see AC P0DQQ7 and AC P81755).</text>
</comment>
<comment type="similarity">
    <text evidence="4">Belongs to the conotoxin T superfamily.</text>
</comment>
<name>CT5A_CONLT</name>
<feature type="signal peptide" evidence="2">
    <location>
        <begin position="1"/>
        <end position="19"/>
    </location>
</feature>
<feature type="propeptide" id="PRO_0000315439" evidence="1">
    <location>
        <begin position="20"/>
        <end position="54"/>
    </location>
</feature>
<feature type="peptide" id="PRO_0000315440" description="Conotoxin Lt5.10">
    <location>
        <begin position="55"/>
        <end position="69"/>
    </location>
</feature>
<dbReference type="EMBL" id="DQ345363">
    <property type="protein sequence ID" value="ABC70199.1"/>
    <property type="molecule type" value="mRNA"/>
</dbReference>
<dbReference type="ConoServer" id="1150">
    <property type="toxin name" value="Lt5j precursor"/>
</dbReference>
<dbReference type="GO" id="GO:0005576">
    <property type="term" value="C:extracellular region"/>
    <property type="evidence" value="ECO:0007669"/>
    <property type="project" value="UniProtKB-SubCell"/>
</dbReference>
<dbReference type="GO" id="GO:0090729">
    <property type="term" value="F:toxin activity"/>
    <property type="evidence" value="ECO:0007669"/>
    <property type="project" value="UniProtKB-KW"/>
</dbReference>
<dbReference type="InterPro" id="IPR031565">
    <property type="entry name" value="T-conotoxin"/>
</dbReference>
<dbReference type="Pfam" id="PF16981">
    <property type="entry name" value="Chi-conotoxin"/>
    <property type="match status" value="1"/>
</dbReference>
<accession>Q1A3Q1</accession>
<reference key="1">
    <citation type="journal article" date="2006" name="Genomics">
        <title>Diversity and evolution of conotoxins based on gene expression profiling of Conus litteratus.</title>
        <authorList>
            <person name="Pi C."/>
            <person name="Liu J."/>
            <person name="Peng C."/>
            <person name="Liu Y."/>
            <person name="Jiang X."/>
            <person name="Zhao Y."/>
            <person name="Tang S."/>
            <person name="Wang L."/>
            <person name="Dong M."/>
            <person name="Chen S."/>
            <person name="Xu A."/>
        </authorList>
    </citation>
    <scope>NUCLEOTIDE SEQUENCE [MRNA]</scope>
    <source>
        <tissue>Venom duct</tissue>
    </source>
</reference>